<proteinExistence type="inferred from homology"/>
<reference key="1">
    <citation type="journal article" date="2003" name="Lancet">
        <title>Sequencing and analysis of the genome of the Whipple's disease bacterium Tropheryma whipplei.</title>
        <authorList>
            <person name="Bentley S.D."/>
            <person name="Maiwald M."/>
            <person name="Murphy L.D."/>
            <person name="Pallen M.J."/>
            <person name="Yeats C.A."/>
            <person name="Dover L.G."/>
            <person name="Norbertczak H.T."/>
            <person name="Besra G.S."/>
            <person name="Quail M.A."/>
            <person name="Harris D.E."/>
            <person name="von Herbay A."/>
            <person name="Goble A."/>
            <person name="Rutter S."/>
            <person name="Squares R."/>
            <person name="Squares S."/>
            <person name="Barrell B.G."/>
            <person name="Parkhill J."/>
            <person name="Relman D.A."/>
        </authorList>
    </citation>
    <scope>NUCLEOTIDE SEQUENCE [LARGE SCALE GENOMIC DNA]</scope>
    <source>
        <strain>TW08/27</strain>
    </source>
</reference>
<protein>
    <recommendedName>
        <fullName evidence="1">Large ribosomal subunit protein bL17</fullName>
    </recommendedName>
    <alternativeName>
        <fullName evidence="3">50S ribosomal protein L17</fullName>
    </alternativeName>
</protein>
<accession>Q83I55</accession>
<comment type="subunit">
    <text evidence="1">Part of the 50S ribosomal subunit. Contacts protein L32.</text>
</comment>
<comment type="similarity">
    <text evidence="1">Belongs to the bacterial ribosomal protein bL17 family.</text>
</comment>
<keyword id="KW-0687">Ribonucleoprotein</keyword>
<keyword id="KW-0689">Ribosomal protein</keyword>
<sequence>MPKPSRGPRMCSGPDHERLVLANMSASLFLNKKLRTTEARAKRLRPFAEKLVTLSKRGGLHSRRRALSILRNKAALHELFTNIAPLVEDRNGGYTRITKVGFRSGDGAPMALIELILEPVSARTRGTDTLPDTVIDTGPDSAPDPVPGSEPGSAAGDLPDADTAPADPGESSSNQRVIR</sequence>
<name>RL17_TROW8</name>
<gene>
    <name evidence="1" type="primary">rplQ</name>
    <name type="ordered locus">TW233</name>
</gene>
<organism>
    <name type="scientific">Tropheryma whipplei (strain TW08/27)</name>
    <name type="common">Whipple's bacillus</name>
    <dbReference type="NCBI Taxonomy" id="218496"/>
    <lineage>
        <taxon>Bacteria</taxon>
        <taxon>Bacillati</taxon>
        <taxon>Actinomycetota</taxon>
        <taxon>Actinomycetes</taxon>
        <taxon>Micrococcales</taxon>
        <taxon>Tropherymataceae</taxon>
        <taxon>Tropheryma</taxon>
    </lineage>
</organism>
<feature type="chain" id="PRO_1000055986" description="Large ribosomal subunit protein bL17">
    <location>
        <begin position="1"/>
        <end position="179"/>
    </location>
</feature>
<feature type="region of interest" description="Disordered" evidence="2">
    <location>
        <begin position="127"/>
        <end position="179"/>
    </location>
</feature>
<feature type="compositionally biased region" description="Low complexity" evidence="2">
    <location>
        <begin position="154"/>
        <end position="168"/>
    </location>
</feature>
<feature type="compositionally biased region" description="Polar residues" evidence="2">
    <location>
        <begin position="170"/>
        <end position="179"/>
    </location>
</feature>
<dbReference type="EMBL" id="BX251410">
    <property type="protein sequence ID" value="CAD66910.1"/>
    <property type="molecule type" value="Genomic_DNA"/>
</dbReference>
<dbReference type="RefSeq" id="WP_011096191.1">
    <property type="nucleotide sequence ID" value="NC_004551.1"/>
</dbReference>
<dbReference type="SMR" id="Q83I55"/>
<dbReference type="GeneID" id="67388009"/>
<dbReference type="KEGG" id="tws:TW233"/>
<dbReference type="HOGENOM" id="CLU_074407_0_0_11"/>
<dbReference type="GO" id="GO:0022625">
    <property type="term" value="C:cytosolic large ribosomal subunit"/>
    <property type="evidence" value="ECO:0007669"/>
    <property type="project" value="TreeGrafter"/>
</dbReference>
<dbReference type="GO" id="GO:0003735">
    <property type="term" value="F:structural constituent of ribosome"/>
    <property type="evidence" value="ECO:0007669"/>
    <property type="project" value="InterPro"/>
</dbReference>
<dbReference type="GO" id="GO:0006412">
    <property type="term" value="P:translation"/>
    <property type="evidence" value="ECO:0007669"/>
    <property type="project" value="UniProtKB-UniRule"/>
</dbReference>
<dbReference type="Gene3D" id="3.90.1030.10">
    <property type="entry name" value="Ribosomal protein L17"/>
    <property type="match status" value="1"/>
</dbReference>
<dbReference type="HAMAP" id="MF_01368">
    <property type="entry name" value="Ribosomal_bL17"/>
    <property type="match status" value="1"/>
</dbReference>
<dbReference type="InterPro" id="IPR000456">
    <property type="entry name" value="Ribosomal_bL17"/>
</dbReference>
<dbReference type="InterPro" id="IPR047859">
    <property type="entry name" value="Ribosomal_bL17_CS"/>
</dbReference>
<dbReference type="InterPro" id="IPR036373">
    <property type="entry name" value="Ribosomal_bL17_sf"/>
</dbReference>
<dbReference type="NCBIfam" id="TIGR00059">
    <property type="entry name" value="L17"/>
    <property type="match status" value="1"/>
</dbReference>
<dbReference type="PANTHER" id="PTHR14413:SF16">
    <property type="entry name" value="LARGE RIBOSOMAL SUBUNIT PROTEIN BL17M"/>
    <property type="match status" value="1"/>
</dbReference>
<dbReference type="PANTHER" id="PTHR14413">
    <property type="entry name" value="RIBOSOMAL PROTEIN L17"/>
    <property type="match status" value="1"/>
</dbReference>
<dbReference type="Pfam" id="PF01196">
    <property type="entry name" value="Ribosomal_L17"/>
    <property type="match status" value="1"/>
</dbReference>
<dbReference type="SUPFAM" id="SSF64263">
    <property type="entry name" value="Prokaryotic ribosomal protein L17"/>
    <property type="match status" value="1"/>
</dbReference>
<dbReference type="PROSITE" id="PS01167">
    <property type="entry name" value="RIBOSOMAL_L17"/>
    <property type="match status" value="1"/>
</dbReference>
<evidence type="ECO:0000255" key="1">
    <source>
        <dbReference type="HAMAP-Rule" id="MF_01368"/>
    </source>
</evidence>
<evidence type="ECO:0000256" key="2">
    <source>
        <dbReference type="SAM" id="MobiDB-lite"/>
    </source>
</evidence>
<evidence type="ECO:0000305" key="3"/>